<evidence type="ECO:0000255" key="1">
    <source>
        <dbReference type="HAMAP-Rule" id="MF_00090"/>
    </source>
</evidence>
<organism>
    <name type="scientific">Methanococcus aeolicus (strain ATCC BAA-1280 / DSM 17508 / OCM 812 / Nankai-3)</name>
    <dbReference type="NCBI Taxonomy" id="419665"/>
    <lineage>
        <taxon>Archaea</taxon>
        <taxon>Methanobacteriati</taxon>
        <taxon>Methanobacteriota</taxon>
        <taxon>Methanomada group</taxon>
        <taxon>Methanococci</taxon>
        <taxon>Methanococcales</taxon>
        <taxon>Methanococcaceae</taxon>
        <taxon>Methanococcus</taxon>
    </lineage>
</organism>
<accession>A6UWM1</accession>
<comment type="function">
    <text evidence="1">Catalyzes the methyl esterification of L-isoaspartyl residues in peptides and proteins that result from spontaneous decomposition of normal L-aspartyl and L-asparaginyl residues. It plays a role in the repair and/or degradation of damaged proteins.</text>
</comment>
<comment type="catalytic activity">
    <reaction evidence="1">
        <text>[protein]-L-isoaspartate + S-adenosyl-L-methionine = [protein]-L-isoaspartate alpha-methyl ester + S-adenosyl-L-homocysteine</text>
        <dbReference type="Rhea" id="RHEA:12705"/>
        <dbReference type="Rhea" id="RHEA-COMP:12143"/>
        <dbReference type="Rhea" id="RHEA-COMP:12144"/>
        <dbReference type="ChEBI" id="CHEBI:57856"/>
        <dbReference type="ChEBI" id="CHEBI:59789"/>
        <dbReference type="ChEBI" id="CHEBI:90596"/>
        <dbReference type="ChEBI" id="CHEBI:90598"/>
        <dbReference type="EC" id="2.1.1.77"/>
    </reaction>
</comment>
<comment type="subcellular location">
    <subcellularLocation>
        <location evidence="1">Cytoplasm</location>
    </subcellularLocation>
</comment>
<comment type="similarity">
    <text evidence="1">Belongs to the methyltransferase superfamily. L-isoaspartyl/D-aspartyl protein methyltransferase family.</text>
</comment>
<feature type="chain" id="PRO_1000004820" description="Protein-L-isoaspartate O-methyltransferase">
    <location>
        <begin position="1"/>
        <end position="216"/>
    </location>
</feature>
<feature type="active site" evidence="1">
    <location>
        <position position="60"/>
    </location>
</feature>
<gene>
    <name evidence="1" type="primary">pcm</name>
    <name type="ordered locus">Maeo_1317</name>
</gene>
<dbReference type="EC" id="2.1.1.77" evidence="1"/>
<dbReference type="EMBL" id="CP000743">
    <property type="protein sequence ID" value="ABR56893.1"/>
    <property type="molecule type" value="Genomic_DNA"/>
</dbReference>
<dbReference type="RefSeq" id="WP_011974025.1">
    <property type="nucleotide sequence ID" value="NC_009635.1"/>
</dbReference>
<dbReference type="SMR" id="A6UWM1"/>
<dbReference type="STRING" id="419665.Maeo_1317"/>
<dbReference type="GeneID" id="5327324"/>
<dbReference type="KEGG" id="mae:Maeo_1317"/>
<dbReference type="eggNOG" id="arCOG00976">
    <property type="taxonomic scope" value="Archaea"/>
</dbReference>
<dbReference type="HOGENOM" id="CLU_055432_2_0_2"/>
<dbReference type="OrthoDB" id="33618at2157"/>
<dbReference type="Proteomes" id="UP000001106">
    <property type="component" value="Chromosome"/>
</dbReference>
<dbReference type="GO" id="GO:0005737">
    <property type="term" value="C:cytoplasm"/>
    <property type="evidence" value="ECO:0007669"/>
    <property type="project" value="UniProtKB-SubCell"/>
</dbReference>
<dbReference type="GO" id="GO:0004719">
    <property type="term" value="F:protein-L-isoaspartate (D-aspartate) O-methyltransferase activity"/>
    <property type="evidence" value="ECO:0007669"/>
    <property type="project" value="UniProtKB-UniRule"/>
</dbReference>
<dbReference type="GO" id="GO:0032259">
    <property type="term" value="P:methylation"/>
    <property type="evidence" value="ECO:0007669"/>
    <property type="project" value="UniProtKB-KW"/>
</dbReference>
<dbReference type="GO" id="GO:0036211">
    <property type="term" value="P:protein modification process"/>
    <property type="evidence" value="ECO:0007669"/>
    <property type="project" value="UniProtKB-UniRule"/>
</dbReference>
<dbReference type="GO" id="GO:0030091">
    <property type="term" value="P:protein repair"/>
    <property type="evidence" value="ECO:0007669"/>
    <property type="project" value="UniProtKB-UniRule"/>
</dbReference>
<dbReference type="CDD" id="cd02440">
    <property type="entry name" value="AdoMet_MTases"/>
    <property type="match status" value="1"/>
</dbReference>
<dbReference type="FunFam" id="3.40.50.150:FF:000010">
    <property type="entry name" value="Protein-L-isoaspartate O-methyltransferase"/>
    <property type="match status" value="1"/>
</dbReference>
<dbReference type="Gene3D" id="3.40.50.150">
    <property type="entry name" value="Vaccinia Virus protein VP39"/>
    <property type="match status" value="1"/>
</dbReference>
<dbReference type="HAMAP" id="MF_00090">
    <property type="entry name" value="PIMT"/>
    <property type="match status" value="1"/>
</dbReference>
<dbReference type="InterPro" id="IPR000682">
    <property type="entry name" value="PCMT"/>
</dbReference>
<dbReference type="InterPro" id="IPR029063">
    <property type="entry name" value="SAM-dependent_MTases_sf"/>
</dbReference>
<dbReference type="NCBIfam" id="TIGR00080">
    <property type="entry name" value="pimt"/>
    <property type="match status" value="1"/>
</dbReference>
<dbReference type="NCBIfam" id="NF001453">
    <property type="entry name" value="PRK00312.1"/>
    <property type="match status" value="1"/>
</dbReference>
<dbReference type="NCBIfam" id="NF010549">
    <property type="entry name" value="PRK13942.1"/>
    <property type="match status" value="1"/>
</dbReference>
<dbReference type="PANTHER" id="PTHR11579">
    <property type="entry name" value="PROTEIN-L-ISOASPARTATE O-METHYLTRANSFERASE"/>
    <property type="match status" value="1"/>
</dbReference>
<dbReference type="PANTHER" id="PTHR11579:SF0">
    <property type="entry name" value="PROTEIN-L-ISOASPARTATE(D-ASPARTATE) O-METHYLTRANSFERASE"/>
    <property type="match status" value="1"/>
</dbReference>
<dbReference type="Pfam" id="PF01135">
    <property type="entry name" value="PCMT"/>
    <property type="match status" value="1"/>
</dbReference>
<dbReference type="SUPFAM" id="SSF53335">
    <property type="entry name" value="S-adenosyl-L-methionine-dependent methyltransferases"/>
    <property type="match status" value="1"/>
</dbReference>
<keyword id="KW-0963">Cytoplasm</keyword>
<keyword id="KW-0489">Methyltransferase</keyword>
<keyword id="KW-0949">S-adenosyl-L-methionine</keyword>
<keyword id="KW-0808">Transferase</keyword>
<proteinExistence type="inferred from homology"/>
<reference key="1">
    <citation type="submission" date="2007-06" db="EMBL/GenBank/DDBJ databases">
        <title>Complete sequence of Methanococcus aeolicus Nankai-3.</title>
        <authorList>
            <consortium name="US DOE Joint Genome Institute"/>
            <person name="Copeland A."/>
            <person name="Lucas S."/>
            <person name="Lapidus A."/>
            <person name="Barry K."/>
            <person name="Glavina del Rio T."/>
            <person name="Dalin E."/>
            <person name="Tice H."/>
            <person name="Pitluck S."/>
            <person name="Chain P."/>
            <person name="Malfatti S."/>
            <person name="Shin M."/>
            <person name="Vergez L."/>
            <person name="Schmutz J."/>
            <person name="Larimer F."/>
            <person name="Land M."/>
            <person name="Hauser L."/>
            <person name="Kyrpides N."/>
            <person name="Lykidis A."/>
            <person name="Sieprawska-Lupa M."/>
            <person name="Whitman W.B."/>
            <person name="Richardson P."/>
        </authorList>
    </citation>
    <scope>NUCLEOTIDE SEQUENCE [LARGE SCALE GENOMIC DNA]</scope>
    <source>
        <strain>ATCC BAA-1280 / DSM 17508 / OCM 812 / Nankai-3</strain>
    </source>
</reference>
<name>PIMT_META3</name>
<protein>
    <recommendedName>
        <fullName evidence="1">Protein-L-isoaspartate O-methyltransferase</fullName>
        <ecNumber evidence="1">2.1.1.77</ecNumber>
    </recommendedName>
    <alternativeName>
        <fullName evidence="1">L-isoaspartyl protein carboxyl methyltransferase</fullName>
    </alternativeName>
    <alternativeName>
        <fullName evidence="1">Protein L-isoaspartyl methyltransferase</fullName>
    </alternativeName>
    <alternativeName>
        <fullName evidence="1">Protein-beta-aspartate methyltransferase</fullName>
        <shortName evidence="1">PIMT</shortName>
    </alternativeName>
</protein>
<sequence>MTIKKMEAIVKGLINAGYLKNKMVSKALLTVPRHEFIPAELHDYAYVDTPLNIGHGQTISAIHMVAIICDALDLKEGDKVLEIGTGSGYHAAVVAEIVGKNGQVITIERIPELAEKAESTLKKLGYTNVKVICGNGTLGSSEFAPYDKIYLTASGPDIPNSLIEQLKKGGKLVAPVGLYIQDLILLEKKNGNIIKKNLGAVAFVPLIGKNGWHNEY</sequence>